<sequence length="85" mass="9342">MANIKSAIKRAKLSEERRAHNASIKSDMRSAVKTVEALVTNNDLENAKEAFKTASKKLDKAARKGLIHQNAAARQKSRLAKQVNA</sequence>
<proteinExistence type="inferred from homology"/>
<organism>
    <name type="scientific">Bacillus cereus (strain ATCC 14579 / DSM 31 / CCUG 7414 / JCM 2152 / NBRC 15305 / NCIMB 9373 / NCTC 2599 / NRRL B-3711)</name>
    <dbReference type="NCBI Taxonomy" id="226900"/>
    <lineage>
        <taxon>Bacteria</taxon>
        <taxon>Bacillati</taxon>
        <taxon>Bacillota</taxon>
        <taxon>Bacilli</taxon>
        <taxon>Bacillales</taxon>
        <taxon>Bacillaceae</taxon>
        <taxon>Bacillus</taxon>
        <taxon>Bacillus cereus group</taxon>
    </lineage>
</organism>
<reference key="1">
    <citation type="journal article" date="2003" name="Nature">
        <title>Genome sequence of Bacillus cereus and comparative analysis with Bacillus anthracis.</title>
        <authorList>
            <person name="Ivanova N."/>
            <person name="Sorokin A."/>
            <person name="Anderson I."/>
            <person name="Galleron N."/>
            <person name="Candelon B."/>
            <person name="Kapatral V."/>
            <person name="Bhattacharyya A."/>
            <person name="Reznik G."/>
            <person name="Mikhailova N."/>
            <person name="Lapidus A."/>
            <person name="Chu L."/>
            <person name="Mazur M."/>
            <person name="Goltsman E."/>
            <person name="Larsen N."/>
            <person name="D'Souza M."/>
            <person name="Walunas T."/>
            <person name="Grechkin Y."/>
            <person name="Pusch G."/>
            <person name="Haselkorn R."/>
            <person name="Fonstein M."/>
            <person name="Ehrlich S.D."/>
            <person name="Overbeek R."/>
            <person name="Kyrpides N.C."/>
        </authorList>
    </citation>
    <scope>NUCLEOTIDE SEQUENCE [LARGE SCALE GENOMIC DNA]</scope>
    <source>
        <strain>ATCC 14579 / DSM 31 / CCUG 7414 / JCM 2152 / NBRC 15305 / NCIMB 9373 / NCTC 2599 / NRRL B-3711</strain>
    </source>
</reference>
<protein>
    <recommendedName>
        <fullName evidence="1">Small ribosomal subunit protein bS20</fullName>
    </recommendedName>
    <alternativeName>
        <fullName evidence="3">30S ribosomal protein S20</fullName>
    </alternativeName>
</protein>
<feature type="chain" id="PRO_0000167912" description="Small ribosomal subunit protein bS20">
    <location>
        <begin position="1"/>
        <end position="85"/>
    </location>
</feature>
<feature type="region of interest" description="Disordered" evidence="2">
    <location>
        <begin position="1"/>
        <end position="25"/>
    </location>
</feature>
<gene>
    <name evidence="1" type="primary">rpsT</name>
    <name type="ordered locus">BC_4320</name>
</gene>
<keyword id="KW-1185">Reference proteome</keyword>
<keyword id="KW-0687">Ribonucleoprotein</keyword>
<keyword id="KW-0689">Ribosomal protein</keyword>
<keyword id="KW-0694">RNA-binding</keyword>
<keyword id="KW-0699">rRNA-binding</keyword>
<comment type="function">
    <text evidence="1">Binds directly to 16S ribosomal RNA.</text>
</comment>
<comment type="similarity">
    <text evidence="1">Belongs to the bacterial ribosomal protein bS20 family.</text>
</comment>
<evidence type="ECO:0000255" key="1">
    <source>
        <dbReference type="HAMAP-Rule" id="MF_00500"/>
    </source>
</evidence>
<evidence type="ECO:0000256" key="2">
    <source>
        <dbReference type="SAM" id="MobiDB-lite"/>
    </source>
</evidence>
<evidence type="ECO:0000305" key="3"/>
<accession>Q818E1</accession>
<name>RS20_BACCR</name>
<dbReference type="EMBL" id="AE016877">
    <property type="protein sequence ID" value="AAP11233.1"/>
    <property type="molecule type" value="Genomic_DNA"/>
</dbReference>
<dbReference type="RefSeq" id="NP_834032.1">
    <property type="nucleotide sequence ID" value="NC_004722.1"/>
</dbReference>
<dbReference type="RefSeq" id="WP_001274011.1">
    <property type="nucleotide sequence ID" value="NZ_CP138336.1"/>
</dbReference>
<dbReference type="SMR" id="Q818E1"/>
<dbReference type="STRING" id="226900.BC_4320"/>
<dbReference type="GeneID" id="93006778"/>
<dbReference type="KEGG" id="bce:BC4320"/>
<dbReference type="PATRIC" id="fig|226900.8.peg.4467"/>
<dbReference type="HOGENOM" id="CLU_160655_1_0_9"/>
<dbReference type="OrthoDB" id="9808392at2"/>
<dbReference type="PRO" id="PR:Q818E1"/>
<dbReference type="Proteomes" id="UP000001417">
    <property type="component" value="Chromosome"/>
</dbReference>
<dbReference type="GO" id="GO:0005829">
    <property type="term" value="C:cytosol"/>
    <property type="evidence" value="ECO:0000318"/>
    <property type="project" value="GO_Central"/>
</dbReference>
<dbReference type="GO" id="GO:0015935">
    <property type="term" value="C:small ribosomal subunit"/>
    <property type="evidence" value="ECO:0000318"/>
    <property type="project" value="GO_Central"/>
</dbReference>
<dbReference type="GO" id="GO:0070181">
    <property type="term" value="F:small ribosomal subunit rRNA binding"/>
    <property type="evidence" value="ECO:0000318"/>
    <property type="project" value="GO_Central"/>
</dbReference>
<dbReference type="GO" id="GO:0003735">
    <property type="term" value="F:structural constituent of ribosome"/>
    <property type="evidence" value="ECO:0007669"/>
    <property type="project" value="InterPro"/>
</dbReference>
<dbReference type="GO" id="GO:0006412">
    <property type="term" value="P:translation"/>
    <property type="evidence" value="ECO:0007669"/>
    <property type="project" value="UniProtKB-UniRule"/>
</dbReference>
<dbReference type="FunFam" id="1.20.58.110:FF:000001">
    <property type="entry name" value="30S ribosomal protein S20"/>
    <property type="match status" value="1"/>
</dbReference>
<dbReference type="Gene3D" id="1.20.58.110">
    <property type="entry name" value="Ribosomal protein S20"/>
    <property type="match status" value="1"/>
</dbReference>
<dbReference type="HAMAP" id="MF_00500">
    <property type="entry name" value="Ribosomal_bS20"/>
    <property type="match status" value="1"/>
</dbReference>
<dbReference type="InterPro" id="IPR002583">
    <property type="entry name" value="Ribosomal_bS20"/>
</dbReference>
<dbReference type="InterPro" id="IPR036510">
    <property type="entry name" value="Ribosomal_bS20_sf"/>
</dbReference>
<dbReference type="NCBIfam" id="TIGR00029">
    <property type="entry name" value="S20"/>
    <property type="match status" value="1"/>
</dbReference>
<dbReference type="PANTHER" id="PTHR33398">
    <property type="entry name" value="30S RIBOSOMAL PROTEIN S20"/>
    <property type="match status" value="1"/>
</dbReference>
<dbReference type="PANTHER" id="PTHR33398:SF1">
    <property type="entry name" value="SMALL RIBOSOMAL SUBUNIT PROTEIN BS20C"/>
    <property type="match status" value="1"/>
</dbReference>
<dbReference type="Pfam" id="PF01649">
    <property type="entry name" value="Ribosomal_S20p"/>
    <property type="match status" value="1"/>
</dbReference>
<dbReference type="SUPFAM" id="SSF46992">
    <property type="entry name" value="Ribosomal protein S20"/>
    <property type="match status" value="1"/>
</dbReference>